<protein>
    <recommendedName>
        <fullName>Uncharacterized protein L248</fullName>
    </recommendedName>
</protein>
<proteinExistence type="predicted"/>
<comment type="subcellular location">
    <subcellularLocation>
        <location evidence="3">Membrane</location>
        <topology evidence="3">Multi-pass membrane protein</topology>
    </subcellularLocation>
</comment>
<name>YL248_MIMIV</name>
<accession>Q5UPT3</accession>
<gene>
    <name type="ordered locus">MIMI_L248</name>
</gene>
<feature type="chain" id="PRO_0000250626" description="Uncharacterized protein L248">
    <location>
        <begin position="1"/>
        <end position="406"/>
    </location>
</feature>
<feature type="transmembrane region" description="Helical" evidence="1">
    <location>
        <begin position="7"/>
        <end position="27"/>
    </location>
</feature>
<feature type="transmembrane region" description="Helical" evidence="1">
    <location>
        <begin position="31"/>
        <end position="51"/>
    </location>
</feature>
<feature type="transmembrane region" description="Helical" evidence="1">
    <location>
        <begin position="65"/>
        <end position="85"/>
    </location>
</feature>
<feature type="transmembrane region" description="Helical" evidence="1">
    <location>
        <begin position="92"/>
        <end position="112"/>
    </location>
</feature>
<feature type="transmembrane region" description="Helical" evidence="1">
    <location>
        <begin position="191"/>
        <end position="211"/>
    </location>
</feature>
<feature type="region of interest" description="Disordered" evidence="2">
    <location>
        <begin position="259"/>
        <end position="331"/>
    </location>
</feature>
<feature type="compositionally biased region" description="Polar residues" evidence="2">
    <location>
        <begin position="262"/>
        <end position="291"/>
    </location>
</feature>
<feature type="compositionally biased region" description="Basic residues" evidence="2">
    <location>
        <begin position="292"/>
        <end position="303"/>
    </location>
</feature>
<feature type="compositionally biased region" description="Low complexity" evidence="2">
    <location>
        <begin position="306"/>
        <end position="318"/>
    </location>
</feature>
<feature type="compositionally biased region" description="Polar residues" evidence="2">
    <location>
        <begin position="319"/>
        <end position="330"/>
    </location>
</feature>
<evidence type="ECO:0000255" key="1"/>
<evidence type="ECO:0000256" key="2">
    <source>
        <dbReference type="SAM" id="MobiDB-lite"/>
    </source>
</evidence>
<evidence type="ECO:0000305" key="3"/>
<organismHost>
    <name type="scientific">Acanthamoeba polyphaga</name>
    <name type="common">Amoeba</name>
    <dbReference type="NCBI Taxonomy" id="5757"/>
</organismHost>
<organism>
    <name type="scientific">Acanthamoeba polyphaga mimivirus</name>
    <name type="common">APMV</name>
    <dbReference type="NCBI Taxonomy" id="212035"/>
    <lineage>
        <taxon>Viruses</taxon>
        <taxon>Varidnaviria</taxon>
        <taxon>Bamfordvirae</taxon>
        <taxon>Nucleocytoviricota</taxon>
        <taxon>Megaviricetes</taxon>
        <taxon>Imitervirales</taxon>
        <taxon>Mimiviridae</taxon>
        <taxon>Megamimivirinae</taxon>
        <taxon>Mimivirus</taxon>
        <taxon>Mimivirus bradfordmassiliense</taxon>
    </lineage>
</organism>
<sequence>MDNIQNLCTNPLIILIGTYMSIKYYLFQIDYFNIQFGLYVTFIISLLYGSVRFNSLQQKKLMDGLIFILHVLFVLICFSIKSEIISGTLNTIFYFGFVKTIIISVVIGSFILSELDNNNHNRIIPEKMCCFCKQNIKKIMVTFVKNIDIDPIIYWSKTFFVKLYTEFKNINSVLSKNTRSEIIIDRICLKISLIKMYLYSVIVPYAISSFFGMNNDYKNIINNIDKIDYPGNLDMSFLEQEVFDSEHLDDLDDLDTPDTLNVPISTNNTDNLNSVKTNQQFNTPVAKSNTKSNRRKKTGKKIRLANQTTSSNSSNNQSPESTGTNNNVVDNKTLLRNKLREKRLARTGSLPTVPQNVDMSMINSLMQNMINNGSLEKIATEFAKNPENVADINNPKLRKLAKSMTK</sequence>
<dbReference type="EMBL" id="AY653733">
    <property type="protein sequence ID" value="AAV50520.1"/>
    <property type="molecule type" value="Genomic_DNA"/>
</dbReference>
<dbReference type="KEGG" id="vg:9924855"/>
<dbReference type="Proteomes" id="UP000001134">
    <property type="component" value="Genome"/>
</dbReference>
<dbReference type="GO" id="GO:0016020">
    <property type="term" value="C:membrane"/>
    <property type="evidence" value="ECO:0007669"/>
    <property type="project" value="UniProtKB-SubCell"/>
</dbReference>
<reference key="1">
    <citation type="journal article" date="2004" name="Science">
        <title>The 1.2-megabase genome sequence of Mimivirus.</title>
        <authorList>
            <person name="Raoult D."/>
            <person name="Audic S."/>
            <person name="Robert C."/>
            <person name="Abergel C."/>
            <person name="Renesto P."/>
            <person name="Ogata H."/>
            <person name="La Scola B."/>
            <person name="Susan M."/>
            <person name="Claverie J.-M."/>
        </authorList>
    </citation>
    <scope>NUCLEOTIDE SEQUENCE [LARGE SCALE GENOMIC DNA]</scope>
    <source>
        <strain>Rowbotham-Bradford</strain>
    </source>
</reference>
<keyword id="KW-0472">Membrane</keyword>
<keyword id="KW-1185">Reference proteome</keyword>
<keyword id="KW-0812">Transmembrane</keyword>
<keyword id="KW-1133">Transmembrane helix</keyword>